<keyword id="KW-0963">Cytoplasm</keyword>
<keyword id="KW-0378">Hydrolase</keyword>
<keyword id="KW-0645">Protease</keyword>
<keyword id="KW-1185">Reference proteome</keyword>
<keyword id="KW-0720">Serine protease</keyword>
<proteinExistence type="evidence at transcript level"/>
<feature type="chain" id="PRO_0000314865" description="Prolyl endopeptidase-like">
    <location>
        <begin position="1"/>
        <end position="732"/>
    </location>
</feature>
<feature type="active site" description="Charge relay system" evidence="1">
    <location>
        <position position="575"/>
    </location>
</feature>
<feature type="active site" description="Charge relay system" evidence="1">
    <location>
        <position position="661"/>
    </location>
</feature>
<feature type="active site" description="Charge relay system" evidence="1">
    <location>
        <position position="707"/>
    </location>
</feature>
<organism>
    <name type="scientific">Gallus gallus</name>
    <name type="common">Chicken</name>
    <dbReference type="NCBI Taxonomy" id="9031"/>
    <lineage>
        <taxon>Eukaryota</taxon>
        <taxon>Metazoa</taxon>
        <taxon>Chordata</taxon>
        <taxon>Craniata</taxon>
        <taxon>Vertebrata</taxon>
        <taxon>Euteleostomi</taxon>
        <taxon>Archelosauria</taxon>
        <taxon>Archosauria</taxon>
        <taxon>Dinosauria</taxon>
        <taxon>Saurischia</taxon>
        <taxon>Theropoda</taxon>
        <taxon>Coelurosauria</taxon>
        <taxon>Aves</taxon>
        <taxon>Neognathae</taxon>
        <taxon>Galloanserae</taxon>
        <taxon>Galliformes</taxon>
        <taxon>Phasianidae</taxon>
        <taxon>Phasianinae</taxon>
        <taxon>Gallus</taxon>
    </lineage>
</organism>
<sequence>MCWTAKSFVRWLSSSVKYYPKDNHLQALCLCTKTKLNKCHILDWSRSPCNSAVPPGRILSWRLFSCKEGTKDLCKREKIASVTASELLYKDLLKSEQENWNKISRSYKAMTKRIKEKIEELHNKYTLHLESPRMRFGGNVYFEENGYILCSKADDDKGNVHILFSTEDMGFSGAYIKRIRISPDERYLATSLQSENSEEATCVIMKLGDVPFVEEVIPNVFSFEWATNDVLYYTSQKNLKCQNVFMTTFTNEKYTKLVYTEQDARFFVDIYCTKDRRFLTINSNSKTTSEVWLIDCRHPFKLPVLVQARTKGVIYHVEHRNNELYILTSYGEPAEYKLMKASVASTGMENWQLVYALEEKTKLIDLEMFRDHCIMFLQKAGYLYLNVIAFVSHSVQSIQLPTWACAFELESHPEHASSTCYFQLTSPVHPPRRFAYSFKENNLIEQAAEEVPIIMNCHTTRLLAKSKDETLVPITVFHNVNSKELHRKPLLVHVYGAYGIDLNMSFKEEKLMLIEEGWILAYCHVRGGGELGLRWHKDGCQQNKLKGLHDLKACIMLLHELGFSQPKYTALTAVSAGGVLAGAICNSDPELIRAVVLQAPFVDVLNTMMKTHLPLSIEEQEEWGNPLADEKCMKYIKNYCPYHNIKPQCYPSVFITAYENDQRVPLTGILRYVQKLRKATLDHASRTRKKGNWIPNIILDIQASGSHCDSSWEDSLNEVARHLAFLKKELQV</sequence>
<dbReference type="EC" id="3.4.21.-" evidence="1"/>
<dbReference type="EMBL" id="AJ720069">
    <property type="protein sequence ID" value="CAG31728.1"/>
    <property type="molecule type" value="mRNA"/>
</dbReference>
<dbReference type="RefSeq" id="NP_001026224.1">
    <property type="nucleotide sequence ID" value="NM_001031053.1"/>
</dbReference>
<dbReference type="SMR" id="Q5ZKL5"/>
<dbReference type="FunCoup" id="Q5ZKL5">
    <property type="interactions" value="416"/>
</dbReference>
<dbReference type="STRING" id="9031.ENSGALP00000016203"/>
<dbReference type="ESTHER" id="chick-q5zkl5">
    <property type="family name" value="S9N_PREPL_Peptidase_S9"/>
</dbReference>
<dbReference type="MEROPS" id="S09.015"/>
<dbReference type="PaxDb" id="9031-ENSGALP00000040816"/>
<dbReference type="GeneID" id="421405"/>
<dbReference type="KEGG" id="gga:421405"/>
<dbReference type="CTD" id="9581"/>
<dbReference type="VEuPathDB" id="HostDB:geneid_421405"/>
<dbReference type="eggNOG" id="KOG2237">
    <property type="taxonomic scope" value="Eukaryota"/>
</dbReference>
<dbReference type="InParanoid" id="Q5ZKL5"/>
<dbReference type="OrthoDB" id="248387at2759"/>
<dbReference type="PhylomeDB" id="Q5ZKL5"/>
<dbReference type="PRO" id="PR:Q5ZKL5"/>
<dbReference type="Proteomes" id="UP000000539">
    <property type="component" value="Unassembled WGS sequence"/>
</dbReference>
<dbReference type="GO" id="GO:0005856">
    <property type="term" value="C:cytoskeleton"/>
    <property type="evidence" value="ECO:0000318"/>
    <property type="project" value="GO_Central"/>
</dbReference>
<dbReference type="GO" id="GO:0005829">
    <property type="term" value="C:cytosol"/>
    <property type="evidence" value="ECO:0007669"/>
    <property type="project" value="UniProtKB-SubCell"/>
</dbReference>
<dbReference type="GO" id="GO:0005794">
    <property type="term" value="C:Golgi apparatus"/>
    <property type="evidence" value="ECO:0000318"/>
    <property type="project" value="GO_Central"/>
</dbReference>
<dbReference type="GO" id="GO:0004252">
    <property type="term" value="F:serine-type endopeptidase activity"/>
    <property type="evidence" value="ECO:0007669"/>
    <property type="project" value="InterPro"/>
</dbReference>
<dbReference type="GO" id="GO:0006508">
    <property type="term" value="P:proteolysis"/>
    <property type="evidence" value="ECO:0007669"/>
    <property type="project" value="UniProtKB-KW"/>
</dbReference>
<dbReference type="FunFam" id="2.130.10.120:FF:000002">
    <property type="entry name" value="prolyl endopeptidase-like isoform X1"/>
    <property type="match status" value="1"/>
</dbReference>
<dbReference type="FunFam" id="3.40.50.1820:FF:000050">
    <property type="entry name" value="prolyl endopeptidase-like isoform X2"/>
    <property type="match status" value="1"/>
</dbReference>
<dbReference type="Gene3D" id="3.40.50.1820">
    <property type="entry name" value="alpha/beta hydrolase"/>
    <property type="match status" value="1"/>
</dbReference>
<dbReference type="Gene3D" id="2.130.10.120">
    <property type="entry name" value="Prolyl oligopeptidase, N-terminal domain"/>
    <property type="match status" value="1"/>
</dbReference>
<dbReference type="InterPro" id="IPR029058">
    <property type="entry name" value="AB_hydrolase_fold"/>
</dbReference>
<dbReference type="InterPro" id="IPR023302">
    <property type="entry name" value="Pept_S9A_N"/>
</dbReference>
<dbReference type="InterPro" id="IPR001375">
    <property type="entry name" value="Peptidase_S9_cat"/>
</dbReference>
<dbReference type="InterPro" id="IPR002470">
    <property type="entry name" value="Peptidase_S9A"/>
</dbReference>
<dbReference type="InterPro" id="IPR051543">
    <property type="entry name" value="Serine_Peptidase_S9A"/>
</dbReference>
<dbReference type="PANTHER" id="PTHR11757:SF19">
    <property type="entry name" value="PROLYL ENDOPEPTIDASE-LIKE"/>
    <property type="match status" value="1"/>
</dbReference>
<dbReference type="PANTHER" id="PTHR11757">
    <property type="entry name" value="PROTEASE FAMILY S9A OLIGOPEPTIDASE"/>
    <property type="match status" value="1"/>
</dbReference>
<dbReference type="Pfam" id="PF00326">
    <property type="entry name" value="Peptidase_S9"/>
    <property type="match status" value="1"/>
</dbReference>
<dbReference type="Pfam" id="PF02897">
    <property type="entry name" value="Peptidase_S9_N"/>
    <property type="match status" value="1"/>
</dbReference>
<dbReference type="PRINTS" id="PR00862">
    <property type="entry name" value="PROLIGOPTASE"/>
</dbReference>
<dbReference type="SUPFAM" id="SSF53474">
    <property type="entry name" value="alpha/beta-Hydrolases"/>
    <property type="match status" value="1"/>
</dbReference>
<dbReference type="SUPFAM" id="SSF50993">
    <property type="entry name" value="Peptidase/esterase 'gauge' domain"/>
    <property type="match status" value="1"/>
</dbReference>
<gene>
    <name type="primary">PREPL</name>
    <name type="ORF">RCJMB04_10c4</name>
</gene>
<evidence type="ECO:0000250" key="1">
    <source>
        <dbReference type="UniProtKB" id="Q4J6C6"/>
    </source>
</evidence>
<evidence type="ECO:0000305" key="2"/>
<protein>
    <recommendedName>
        <fullName>Prolyl endopeptidase-like</fullName>
        <ecNumber evidence="1">3.4.21.-</ecNumber>
    </recommendedName>
    <alternativeName>
        <fullName>Prolylendopeptidase-like</fullName>
    </alternativeName>
</protein>
<comment type="function">
    <text evidence="1">Serine peptidase whose precise substrate specificity remains unclear (By similarity). Does not cleave peptides after a arginine or lysine residue (By similarity). Regulates trans-Golgi network morphology and sorting by regulating the membrane binding of the AP-1 complex (By similarity). May play a role in the regulation of synaptic vesicle exocytosis (By similarity).</text>
</comment>
<comment type="subunit">
    <text evidence="1">Homodimer.</text>
</comment>
<comment type="subcellular location">
    <subcellularLocation>
        <location evidence="1">Cytoplasm</location>
        <location evidence="1">Cytosol</location>
    </subcellularLocation>
</comment>
<comment type="similarity">
    <text evidence="2">Belongs to the peptidase S9A family.</text>
</comment>
<reference key="1">
    <citation type="journal article" date="2005" name="Genome Biol.">
        <title>Full-length cDNAs from chicken bursal lymphocytes to facilitate gene function analysis.</title>
        <authorList>
            <person name="Caldwell R.B."/>
            <person name="Kierzek A.M."/>
            <person name="Arakawa H."/>
            <person name="Bezzubov Y."/>
            <person name="Zaim J."/>
            <person name="Fiedler P."/>
            <person name="Kutter S."/>
            <person name="Blagodatski A."/>
            <person name="Kostovska D."/>
            <person name="Koter M."/>
            <person name="Plachy J."/>
            <person name="Carninci P."/>
            <person name="Hayashizaki Y."/>
            <person name="Buerstedde J.-M."/>
        </authorList>
    </citation>
    <scope>NUCLEOTIDE SEQUENCE [LARGE SCALE MRNA]</scope>
    <source>
        <strain>CB</strain>
        <tissue>Bursa of Fabricius</tissue>
    </source>
</reference>
<name>PPCEL_CHICK</name>
<accession>Q5ZKL5</accession>